<reference key="1">
    <citation type="journal article" date="2003" name="Nature">
        <title>The genome sequence of Bacillus anthracis Ames and comparison to closely related bacteria.</title>
        <authorList>
            <person name="Read T.D."/>
            <person name="Peterson S.N."/>
            <person name="Tourasse N.J."/>
            <person name="Baillie L.W."/>
            <person name="Paulsen I.T."/>
            <person name="Nelson K.E."/>
            <person name="Tettelin H."/>
            <person name="Fouts D.E."/>
            <person name="Eisen J.A."/>
            <person name="Gill S.R."/>
            <person name="Holtzapple E.K."/>
            <person name="Okstad O.A."/>
            <person name="Helgason E."/>
            <person name="Rilstone J."/>
            <person name="Wu M."/>
            <person name="Kolonay J.F."/>
            <person name="Beanan M.J."/>
            <person name="Dodson R.J."/>
            <person name="Brinkac L.M."/>
            <person name="Gwinn M.L."/>
            <person name="DeBoy R.T."/>
            <person name="Madpu R."/>
            <person name="Daugherty S.C."/>
            <person name="Durkin A.S."/>
            <person name="Haft D.H."/>
            <person name="Nelson W.C."/>
            <person name="Peterson J.D."/>
            <person name="Pop M."/>
            <person name="Khouri H.M."/>
            <person name="Radune D."/>
            <person name="Benton J.L."/>
            <person name="Mahamoud Y."/>
            <person name="Jiang L."/>
            <person name="Hance I.R."/>
            <person name="Weidman J.F."/>
            <person name="Berry K.J."/>
            <person name="Plaut R.D."/>
            <person name="Wolf A.M."/>
            <person name="Watkins K.L."/>
            <person name="Nierman W.C."/>
            <person name="Hazen A."/>
            <person name="Cline R.T."/>
            <person name="Redmond C."/>
            <person name="Thwaite J.E."/>
            <person name="White O."/>
            <person name="Salzberg S.L."/>
            <person name="Thomason B."/>
            <person name="Friedlander A.M."/>
            <person name="Koehler T.M."/>
            <person name="Hanna P.C."/>
            <person name="Kolstoe A.-B."/>
            <person name="Fraser C.M."/>
        </authorList>
    </citation>
    <scope>NUCLEOTIDE SEQUENCE [LARGE SCALE GENOMIC DNA]</scope>
    <source>
        <strain>Ames / isolate Porton</strain>
    </source>
</reference>
<reference key="2">
    <citation type="submission" date="2004-01" db="EMBL/GenBank/DDBJ databases">
        <title>Complete genome sequence of Bacillus anthracis Sterne.</title>
        <authorList>
            <person name="Brettin T.S."/>
            <person name="Bruce D."/>
            <person name="Challacombe J.F."/>
            <person name="Gilna P."/>
            <person name="Han C."/>
            <person name="Hill K."/>
            <person name="Hitchcock P."/>
            <person name="Jackson P."/>
            <person name="Keim P."/>
            <person name="Longmire J."/>
            <person name="Lucas S."/>
            <person name="Okinaka R."/>
            <person name="Richardson P."/>
            <person name="Rubin E."/>
            <person name="Tice H."/>
        </authorList>
    </citation>
    <scope>NUCLEOTIDE SEQUENCE [LARGE SCALE GENOMIC DNA]</scope>
    <source>
        <strain>Sterne</strain>
    </source>
</reference>
<reference key="3">
    <citation type="journal article" date="2009" name="J. Bacteriol.">
        <title>The complete genome sequence of Bacillus anthracis Ames 'Ancestor'.</title>
        <authorList>
            <person name="Ravel J."/>
            <person name="Jiang L."/>
            <person name="Stanley S.T."/>
            <person name="Wilson M.R."/>
            <person name="Decker R.S."/>
            <person name="Read T.D."/>
            <person name="Worsham P."/>
            <person name="Keim P.S."/>
            <person name="Salzberg S.L."/>
            <person name="Fraser-Liggett C.M."/>
            <person name="Rasko D.A."/>
        </authorList>
    </citation>
    <scope>NUCLEOTIDE SEQUENCE [LARGE SCALE GENOMIC DNA]</scope>
    <source>
        <strain>Ames ancestor</strain>
    </source>
</reference>
<accession>Q81KZ0</accession>
<accession>Q6HSE7</accession>
<accession>Q6KLP2</accession>
<comment type="function">
    <text evidence="1">Catalyzes the phosphorylation of D-fructose 6-phosphate to fructose 1,6-bisphosphate by ATP, the first committing step of glycolysis.</text>
</comment>
<comment type="catalytic activity">
    <reaction evidence="1">
        <text>beta-D-fructose 6-phosphate + ATP = beta-D-fructose 1,6-bisphosphate + ADP + H(+)</text>
        <dbReference type="Rhea" id="RHEA:16109"/>
        <dbReference type="ChEBI" id="CHEBI:15378"/>
        <dbReference type="ChEBI" id="CHEBI:30616"/>
        <dbReference type="ChEBI" id="CHEBI:32966"/>
        <dbReference type="ChEBI" id="CHEBI:57634"/>
        <dbReference type="ChEBI" id="CHEBI:456216"/>
        <dbReference type="EC" id="2.7.1.11"/>
    </reaction>
</comment>
<comment type="cofactor">
    <cofactor evidence="1">
        <name>Mg(2+)</name>
        <dbReference type="ChEBI" id="CHEBI:18420"/>
    </cofactor>
</comment>
<comment type="activity regulation">
    <text evidence="1">Allosterically activated by ADP and other diphosphonucleosides, and allosterically inhibited by phosphoenolpyruvate.</text>
</comment>
<comment type="pathway">
    <text evidence="1">Carbohydrate degradation; glycolysis; D-glyceraldehyde 3-phosphate and glycerone phosphate from D-glucose: step 3/4.</text>
</comment>
<comment type="subunit">
    <text evidence="1">Homotetramer.</text>
</comment>
<comment type="subcellular location">
    <subcellularLocation>
        <location evidence="1">Cytoplasm</location>
    </subcellularLocation>
</comment>
<comment type="similarity">
    <text evidence="1">Belongs to the phosphofructokinase type A (PFKA) family. ATP-dependent PFK group I subfamily. Prokaryotic clade 'B1' sub-subfamily.</text>
</comment>
<dbReference type="EC" id="2.7.1.11" evidence="1"/>
<dbReference type="EMBL" id="AE016879">
    <property type="protein sequence ID" value="AAP28533.1"/>
    <property type="molecule type" value="Genomic_DNA"/>
</dbReference>
<dbReference type="EMBL" id="AE017334">
    <property type="protein sequence ID" value="AAT33963.1"/>
    <property type="molecule type" value="Genomic_DNA"/>
</dbReference>
<dbReference type="EMBL" id="AE017225">
    <property type="protein sequence ID" value="AAT56791.1"/>
    <property type="molecule type" value="Genomic_DNA"/>
</dbReference>
<dbReference type="RefSeq" id="NP_847047.1">
    <property type="nucleotide sequence ID" value="NC_003997.3"/>
</dbReference>
<dbReference type="RefSeq" id="WP_000821163.1">
    <property type="nucleotide sequence ID" value="NZ_WXXJ01000026.1"/>
</dbReference>
<dbReference type="RefSeq" id="YP_030741.1">
    <property type="nucleotide sequence ID" value="NC_005945.1"/>
</dbReference>
<dbReference type="SMR" id="Q81KZ0"/>
<dbReference type="STRING" id="261594.GBAA_4844"/>
<dbReference type="DNASU" id="1087130"/>
<dbReference type="GeneID" id="93006511"/>
<dbReference type="KEGG" id="ban:BA_4844"/>
<dbReference type="KEGG" id="bar:GBAA_4844"/>
<dbReference type="KEGG" id="bat:BAS4493"/>
<dbReference type="PATRIC" id="fig|198094.11.peg.4805"/>
<dbReference type="eggNOG" id="COG0205">
    <property type="taxonomic scope" value="Bacteria"/>
</dbReference>
<dbReference type="HOGENOM" id="CLU_020655_0_1_9"/>
<dbReference type="OMA" id="GYQGMIE"/>
<dbReference type="OrthoDB" id="9802503at2"/>
<dbReference type="UniPathway" id="UPA00109">
    <property type="reaction ID" value="UER00182"/>
</dbReference>
<dbReference type="Proteomes" id="UP000000427">
    <property type="component" value="Chromosome"/>
</dbReference>
<dbReference type="Proteomes" id="UP000000594">
    <property type="component" value="Chromosome"/>
</dbReference>
<dbReference type="GO" id="GO:0005945">
    <property type="term" value="C:6-phosphofructokinase complex"/>
    <property type="evidence" value="ECO:0007669"/>
    <property type="project" value="TreeGrafter"/>
</dbReference>
<dbReference type="GO" id="GO:0003872">
    <property type="term" value="F:6-phosphofructokinase activity"/>
    <property type="evidence" value="ECO:0007669"/>
    <property type="project" value="UniProtKB-UniRule"/>
</dbReference>
<dbReference type="GO" id="GO:0016208">
    <property type="term" value="F:AMP binding"/>
    <property type="evidence" value="ECO:0007669"/>
    <property type="project" value="TreeGrafter"/>
</dbReference>
<dbReference type="GO" id="GO:0005524">
    <property type="term" value="F:ATP binding"/>
    <property type="evidence" value="ECO:0007669"/>
    <property type="project" value="UniProtKB-KW"/>
</dbReference>
<dbReference type="GO" id="GO:0070095">
    <property type="term" value="F:fructose-6-phosphate binding"/>
    <property type="evidence" value="ECO:0007669"/>
    <property type="project" value="TreeGrafter"/>
</dbReference>
<dbReference type="GO" id="GO:0042802">
    <property type="term" value="F:identical protein binding"/>
    <property type="evidence" value="ECO:0007669"/>
    <property type="project" value="TreeGrafter"/>
</dbReference>
<dbReference type="GO" id="GO:0046872">
    <property type="term" value="F:metal ion binding"/>
    <property type="evidence" value="ECO:0007669"/>
    <property type="project" value="UniProtKB-KW"/>
</dbReference>
<dbReference type="GO" id="GO:0048029">
    <property type="term" value="F:monosaccharide binding"/>
    <property type="evidence" value="ECO:0007669"/>
    <property type="project" value="TreeGrafter"/>
</dbReference>
<dbReference type="GO" id="GO:0061621">
    <property type="term" value="P:canonical glycolysis"/>
    <property type="evidence" value="ECO:0007669"/>
    <property type="project" value="TreeGrafter"/>
</dbReference>
<dbReference type="GO" id="GO:0030388">
    <property type="term" value="P:fructose 1,6-bisphosphate metabolic process"/>
    <property type="evidence" value="ECO:0007669"/>
    <property type="project" value="TreeGrafter"/>
</dbReference>
<dbReference type="GO" id="GO:0006002">
    <property type="term" value="P:fructose 6-phosphate metabolic process"/>
    <property type="evidence" value="ECO:0007669"/>
    <property type="project" value="InterPro"/>
</dbReference>
<dbReference type="CDD" id="cd00763">
    <property type="entry name" value="Bacterial_PFK"/>
    <property type="match status" value="1"/>
</dbReference>
<dbReference type="FunFam" id="3.40.50.450:FF:000001">
    <property type="entry name" value="ATP-dependent 6-phosphofructokinase"/>
    <property type="match status" value="1"/>
</dbReference>
<dbReference type="FunFam" id="3.40.50.460:FF:000002">
    <property type="entry name" value="ATP-dependent 6-phosphofructokinase"/>
    <property type="match status" value="1"/>
</dbReference>
<dbReference type="Gene3D" id="3.40.50.450">
    <property type="match status" value="1"/>
</dbReference>
<dbReference type="Gene3D" id="3.40.50.460">
    <property type="entry name" value="Phosphofructokinase domain"/>
    <property type="match status" value="1"/>
</dbReference>
<dbReference type="HAMAP" id="MF_00339">
    <property type="entry name" value="Phosphofructokinase_I_B1"/>
    <property type="match status" value="1"/>
</dbReference>
<dbReference type="InterPro" id="IPR022953">
    <property type="entry name" value="ATP_PFK"/>
</dbReference>
<dbReference type="InterPro" id="IPR012003">
    <property type="entry name" value="ATP_PFK_prok-type"/>
</dbReference>
<dbReference type="InterPro" id="IPR012828">
    <property type="entry name" value="PFKA_ATP_prok"/>
</dbReference>
<dbReference type="InterPro" id="IPR015912">
    <property type="entry name" value="Phosphofructokinase_CS"/>
</dbReference>
<dbReference type="InterPro" id="IPR000023">
    <property type="entry name" value="Phosphofructokinase_dom"/>
</dbReference>
<dbReference type="InterPro" id="IPR035966">
    <property type="entry name" value="PKF_sf"/>
</dbReference>
<dbReference type="NCBIfam" id="TIGR02482">
    <property type="entry name" value="PFKA_ATP"/>
    <property type="match status" value="1"/>
</dbReference>
<dbReference type="NCBIfam" id="NF002872">
    <property type="entry name" value="PRK03202.1"/>
    <property type="match status" value="1"/>
</dbReference>
<dbReference type="PANTHER" id="PTHR13697:SF4">
    <property type="entry name" value="ATP-DEPENDENT 6-PHOSPHOFRUCTOKINASE"/>
    <property type="match status" value="1"/>
</dbReference>
<dbReference type="PANTHER" id="PTHR13697">
    <property type="entry name" value="PHOSPHOFRUCTOKINASE"/>
    <property type="match status" value="1"/>
</dbReference>
<dbReference type="Pfam" id="PF00365">
    <property type="entry name" value="PFK"/>
    <property type="match status" value="1"/>
</dbReference>
<dbReference type="PIRSF" id="PIRSF000532">
    <property type="entry name" value="ATP_PFK_prok"/>
    <property type="match status" value="1"/>
</dbReference>
<dbReference type="PRINTS" id="PR00476">
    <property type="entry name" value="PHFRCTKINASE"/>
</dbReference>
<dbReference type="SUPFAM" id="SSF53784">
    <property type="entry name" value="Phosphofructokinase"/>
    <property type="match status" value="1"/>
</dbReference>
<dbReference type="PROSITE" id="PS00433">
    <property type="entry name" value="PHOSPHOFRUCTOKINASE"/>
    <property type="match status" value="1"/>
</dbReference>
<gene>
    <name evidence="1" type="primary">pfkA</name>
    <name type="ordered locus">BA_4844</name>
    <name type="ordered locus">GBAA_4844</name>
    <name type="ordered locus">BAS4493</name>
</gene>
<sequence>MKRIGVLTSGGDSPGMNAAIRAVVRKAIFHDIEVYGIYHGYAGLISGHIEKLELGSVGDIIHRGGTKLYTARCPEFKDPEVRLKGIEQLKKHGIEGLVVIGGDGSYQGAKKLTEQGFPCVGVPGTIDNDIPGTDFTIGFDTALNTVIDAIDKIRDTATSHERTYVIEVMGRHAGDIALWAGLADGAETILIPEEEYDMEDVIARLKRGSERGKKHSIIVVAEGVGSAIDIGKHIEEATNFDTRVTVLGHVQRGGSPSAQDRVLASRLGARAVELLIAGKGGRCVGIQDNKLVDHDIIEALAQKHTIDKDMYQLSKELSI</sequence>
<protein>
    <recommendedName>
        <fullName evidence="1">ATP-dependent 6-phosphofructokinase</fullName>
        <shortName evidence="1">ATP-PFK</shortName>
        <shortName evidence="1">Phosphofructokinase</shortName>
        <ecNumber evidence="1">2.7.1.11</ecNumber>
    </recommendedName>
    <alternativeName>
        <fullName evidence="1">Phosphohexokinase</fullName>
    </alternativeName>
</protein>
<feature type="chain" id="PRO_1000059739" description="ATP-dependent 6-phosphofructokinase">
    <location>
        <begin position="1"/>
        <end position="319"/>
    </location>
</feature>
<feature type="active site" description="Proton acceptor" evidence="1">
    <location>
        <position position="127"/>
    </location>
</feature>
<feature type="binding site" evidence="1">
    <location>
        <position position="11"/>
    </location>
    <ligand>
        <name>ATP</name>
        <dbReference type="ChEBI" id="CHEBI:30616"/>
    </ligand>
</feature>
<feature type="binding site" evidence="1">
    <location>
        <begin position="21"/>
        <end position="25"/>
    </location>
    <ligand>
        <name>ADP</name>
        <dbReference type="ChEBI" id="CHEBI:456216"/>
        <note>allosteric activator; ligand shared between dimeric partners</note>
    </ligand>
</feature>
<feature type="binding site" evidence="1">
    <location>
        <begin position="72"/>
        <end position="73"/>
    </location>
    <ligand>
        <name>ATP</name>
        <dbReference type="ChEBI" id="CHEBI:30616"/>
    </ligand>
</feature>
<feature type="binding site" evidence="1">
    <location>
        <begin position="102"/>
        <end position="105"/>
    </location>
    <ligand>
        <name>ATP</name>
        <dbReference type="ChEBI" id="CHEBI:30616"/>
    </ligand>
</feature>
<feature type="binding site" evidence="1">
    <location>
        <position position="103"/>
    </location>
    <ligand>
        <name>Mg(2+)</name>
        <dbReference type="ChEBI" id="CHEBI:18420"/>
        <note>catalytic</note>
    </ligand>
</feature>
<feature type="binding site" description="in other chain" evidence="1">
    <location>
        <begin position="125"/>
        <end position="127"/>
    </location>
    <ligand>
        <name>substrate</name>
        <note>ligand shared between dimeric partners</note>
    </ligand>
</feature>
<feature type="binding site" description="in other chain" evidence="1">
    <location>
        <position position="154"/>
    </location>
    <ligand>
        <name>ADP</name>
        <dbReference type="ChEBI" id="CHEBI:456216"/>
        <note>allosteric activator; ligand shared between dimeric partners</note>
    </ligand>
</feature>
<feature type="binding site" evidence="1">
    <location>
        <position position="162"/>
    </location>
    <ligand>
        <name>substrate</name>
        <note>ligand shared between dimeric partners</note>
    </ligand>
</feature>
<feature type="binding site" description="in other chain" evidence="1">
    <location>
        <begin position="169"/>
        <end position="171"/>
    </location>
    <ligand>
        <name>substrate</name>
        <note>ligand shared between dimeric partners</note>
    </ligand>
</feature>
<feature type="binding site" description="in other chain" evidence="1">
    <location>
        <begin position="185"/>
        <end position="187"/>
    </location>
    <ligand>
        <name>ADP</name>
        <dbReference type="ChEBI" id="CHEBI:456216"/>
        <note>allosteric activator; ligand shared between dimeric partners</note>
    </ligand>
</feature>
<feature type="binding site" description="in other chain" evidence="1">
    <location>
        <position position="211"/>
    </location>
    <ligand>
        <name>ADP</name>
        <dbReference type="ChEBI" id="CHEBI:456216"/>
        <note>allosteric activator; ligand shared between dimeric partners</note>
    </ligand>
</feature>
<feature type="binding site" description="in other chain" evidence="1">
    <location>
        <begin position="213"/>
        <end position="215"/>
    </location>
    <ligand>
        <name>ADP</name>
        <dbReference type="ChEBI" id="CHEBI:456216"/>
        <note>allosteric activator; ligand shared between dimeric partners</note>
    </ligand>
</feature>
<feature type="binding site" description="in other chain" evidence="1">
    <location>
        <position position="222"/>
    </location>
    <ligand>
        <name>substrate</name>
        <note>ligand shared between dimeric partners</note>
    </ligand>
</feature>
<feature type="binding site" evidence="1">
    <location>
        <position position="243"/>
    </location>
    <ligand>
        <name>substrate</name>
        <note>ligand shared between dimeric partners</note>
    </ligand>
</feature>
<feature type="binding site" description="in other chain" evidence="1">
    <location>
        <begin position="249"/>
        <end position="252"/>
    </location>
    <ligand>
        <name>substrate</name>
        <note>ligand shared between dimeric partners</note>
    </ligand>
</feature>
<organism>
    <name type="scientific">Bacillus anthracis</name>
    <dbReference type="NCBI Taxonomy" id="1392"/>
    <lineage>
        <taxon>Bacteria</taxon>
        <taxon>Bacillati</taxon>
        <taxon>Bacillota</taxon>
        <taxon>Bacilli</taxon>
        <taxon>Bacillales</taxon>
        <taxon>Bacillaceae</taxon>
        <taxon>Bacillus</taxon>
        <taxon>Bacillus cereus group</taxon>
    </lineage>
</organism>
<keyword id="KW-0021">Allosteric enzyme</keyword>
<keyword id="KW-0067">ATP-binding</keyword>
<keyword id="KW-0963">Cytoplasm</keyword>
<keyword id="KW-0324">Glycolysis</keyword>
<keyword id="KW-0418">Kinase</keyword>
<keyword id="KW-0460">Magnesium</keyword>
<keyword id="KW-0479">Metal-binding</keyword>
<keyword id="KW-0547">Nucleotide-binding</keyword>
<keyword id="KW-1185">Reference proteome</keyword>
<keyword id="KW-0808">Transferase</keyword>
<name>PFKA_BACAN</name>
<evidence type="ECO:0000255" key="1">
    <source>
        <dbReference type="HAMAP-Rule" id="MF_00339"/>
    </source>
</evidence>
<proteinExistence type="inferred from homology"/>